<comment type="function">
    <text evidence="1">Probable UDP-sugar:UMP transmembrane antiporter involved in UDP-alpha-D-glucuronate/UDP-GlcA, UDP-GlcNAc/UDP-N-acetyl-alpha-D-glucosamine and UDP-N-acetyl-alpha-D-galactosamine/UDP-GalNAc transport from the cytosol to the lumen of the Golgi.</text>
</comment>
<comment type="catalytic activity">
    <reaction evidence="1">
        <text>UMP(out) + UDP-alpha-D-glucuronate(in) = UMP(in) + UDP-alpha-D-glucuronate(out)</text>
        <dbReference type="Rhea" id="RHEA:72727"/>
        <dbReference type="ChEBI" id="CHEBI:57865"/>
        <dbReference type="ChEBI" id="CHEBI:58052"/>
    </reaction>
</comment>
<comment type="catalytic activity">
    <reaction evidence="1">
        <text>UMP(out) + UDP-N-acetyl-alpha-D-glucosamine(in) = UMP(in) + UDP-N-acetyl-alpha-D-glucosamine(out)</text>
        <dbReference type="Rhea" id="RHEA:72695"/>
        <dbReference type="ChEBI" id="CHEBI:57705"/>
        <dbReference type="ChEBI" id="CHEBI:57865"/>
    </reaction>
</comment>
<comment type="catalytic activity">
    <reaction evidence="1">
        <text>UDP-N-acetyl-alpha-D-galactosamine(in) + UMP(out) = UDP-N-acetyl-alpha-D-galactosamine(out) + UMP(in)</text>
        <dbReference type="Rhea" id="RHEA:72735"/>
        <dbReference type="ChEBI" id="CHEBI:57865"/>
        <dbReference type="ChEBI" id="CHEBI:67138"/>
    </reaction>
</comment>
<comment type="subunit">
    <text evidence="1">Probably forms homooligomers and heterooligomers with SLC35A1, SLC35A2, SLC35A3 and SLC35A4.</text>
</comment>
<comment type="subcellular location">
    <subcellularLocation>
        <location evidence="1">Golgi apparatus membrane</location>
        <topology evidence="2">Multi-pass membrane protein</topology>
    </subcellularLocation>
</comment>
<comment type="similarity">
    <text evidence="4">Belongs to the nucleotide-sugar transporter family. SLC35A subfamily.</text>
</comment>
<comment type="caution">
    <text evidence="4">It is uncertain whether Met-1 or Met-14 is the initiator.</text>
</comment>
<organism>
    <name type="scientific">Mus musculus</name>
    <name type="common">Mouse</name>
    <dbReference type="NCBI Taxonomy" id="10090"/>
    <lineage>
        <taxon>Eukaryota</taxon>
        <taxon>Metazoa</taxon>
        <taxon>Chordata</taxon>
        <taxon>Craniata</taxon>
        <taxon>Vertebrata</taxon>
        <taxon>Euteleostomi</taxon>
        <taxon>Mammalia</taxon>
        <taxon>Eutheria</taxon>
        <taxon>Euarchontoglires</taxon>
        <taxon>Glires</taxon>
        <taxon>Rodentia</taxon>
        <taxon>Myomorpha</taxon>
        <taxon>Muroidea</taxon>
        <taxon>Muridae</taxon>
        <taxon>Murinae</taxon>
        <taxon>Mus</taxon>
        <taxon>Mus</taxon>
    </lineage>
</organism>
<reference key="1">
    <citation type="journal article" date="2005" name="Science">
        <title>The transcriptional landscape of the mammalian genome.</title>
        <authorList>
            <person name="Carninci P."/>
            <person name="Kasukawa T."/>
            <person name="Katayama S."/>
            <person name="Gough J."/>
            <person name="Frith M.C."/>
            <person name="Maeda N."/>
            <person name="Oyama R."/>
            <person name="Ravasi T."/>
            <person name="Lenhard B."/>
            <person name="Wells C."/>
            <person name="Kodzius R."/>
            <person name="Shimokawa K."/>
            <person name="Bajic V.B."/>
            <person name="Brenner S.E."/>
            <person name="Batalov S."/>
            <person name="Forrest A.R."/>
            <person name="Zavolan M."/>
            <person name="Davis M.J."/>
            <person name="Wilming L.G."/>
            <person name="Aidinis V."/>
            <person name="Allen J.E."/>
            <person name="Ambesi-Impiombato A."/>
            <person name="Apweiler R."/>
            <person name="Aturaliya R.N."/>
            <person name="Bailey T.L."/>
            <person name="Bansal M."/>
            <person name="Baxter L."/>
            <person name="Beisel K.W."/>
            <person name="Bersano T."/>
            <person name="Bono H."/>
            <person name="Chalk A.M."/>
            <person name="Chiu K.P."/>
            <person name="Choudhary V."/>
            <person name="Christoffels A."/>
            <person name="Clutterbuck D.R."/>
            <person name="Crowe M.L."/>
            <person name="Dalla E."/>
            <person name="Dalrymple B.P."/>
            <person name="de Bono B."/>
            <person name="Della Gatta G."/>
            <person name="di Bernardo D."/>
            <person name="Down T."/>
            <person name="Engstrom P."/>
            <person name="Fagiolini M."/>
            <person name="Faulkner G."/>
            <person name="Fletcher C.F."/>
            <person name="Fukushima T."/>
            <person name="Furuno M."/>
            <person name="Futaki S."/>
            <person name="Gariboldi M."/>
            <person name="Georgii-Hemming P."/>
            <person name="Gingeras T.R."/>
            <person name="Gojobori T."/>
            <person name="Green R.E."/>
            <person name="Gustincich S."/>
            <person name="Harbers M."/>
            <person name="Hayashi Y."/>
            <person name="Hensch T.K."/>
            <person name="Hirokawa N."/>
            <person name="Hill D."/>
            <person name="Huminiecki L."/>
            <person name="Iacono M."/>
            <person name="Ikeo K."/>
            <person name="Iwama A."/>
            <person name="Ishikawa T."/>
            <person name="Jakt M."/>
            <person name="Kanapin A."/>
            <person name="Katoh M."/>
            <person name="Kawasawa Y."/>
            <person name="Kelso J."/>
            <person name="Kitamura H."/>
            <person name="Kitano H."/>
            <person name="Kollias G."/>
            <person name="Krishnan S.P."/>
            <person name="Kruger A."/>
            <person name="Kummerfeld S.K."/>
            <person name="Kurochkin I.V."/>
            <person name="Lareau L.F."/>
            <person name="Lazarevic D."/>
            <person name="Lipovich L."/>
            <person name="Liu J."/>
            <person name="Liuni S."/>
            <person name="McWilliam S."/>
            <person name="Madan Babu M."/>
            <person name="Madera M."/>
            <person name="Marchionni L."/>
            <person name="Matsuda H."/>
            <person name="Matsuzawa S."/>
            <person name="Miki H."/>
            <person name="Mignone F."/>
            <person name="Miyake S."/>
            <person name="Morris K."/>
            <person name="Mottagui-Tabar S."/>
            <person name="Mulder N."/>
            <person name="Nakano N."/>
            <person name="Nakauchi H."/>
            <person name="Ng P."/>
            <person name="Nilsson R."/>
            <person name="Nishiguchi S."/>
            <person name="Nishikawa S."/>
            <person name="Nori F."/>
            <person name="Ohara O."/>
            <person name="Okazaki Y."/>
            <person name="Orlando V."/>
            <person name="Pang K.C."/>
            <person name="Pavan W.J."/>
            <person name="Pavesi G."/>
            <person name="Pesole G."/>
            <person name="Petrovsky N."/>
            <person name="Piazza S."/>
            <person name="Reed J."/>
            <person name="Reid J.F."/>
            <person name="Ring B.Z."/>
            <person name="Ringwald M."/>
            <person name="Rost B."/>
            <person name="Ruan Y."/>
            <person name="Salzberg S.L."/>
            <person name="Sandelin A."/>
            <person name="Schneider C."/>
            <person name="Schoenbach C."/>
            <person name="Sekiguchi K."/>
            <person name="Semple C.A."/>
            <person name="Seno S."/>
            <person name="Sessa L."/>
            <person name="Sheng Y."/>
            <person name="Shibata Y."/>
            <person name="Shimada H."/>
            <person name="Shimada K."/>
            <person name="Silva D."/>
            <person name="Sinclair B."/>
            <person name="Sperling S."/>
            <person name="Stupka E."/>
            <person name="Sugiura K."/>
            <person name="Sultana R."/>
            <person name="Takenaka Y."/>
            <person name="Taki K."/>
            <person name="Tammoja K."/>
            <person name="Tan S.L."/>
            <person name="Tang S."/>
            <person name="Taylor M.S."/>
            <person name="Tegner J."/>
            <person name="Teichmann S.A."/>
            <person name="Ueda H.R."/>
            <person name="van Nimwegen E."/>
            <person name="Verardo R."/>
            <person name="Wei C.L."/>
            <person name="Yagi K."/>
            <person name="Yamanishi H."/>
            <person name="Zabarovsky E."/>
            <person name="Zhu S."/>
            <person name="Zimmer A."/>
            <person name="Hide W."/>
            <person name="Bult C."/>
            <person name="Grimmond S.M."/>
            <person name="Teasdale R.D."/>
            <person name="Liu E.T."/>
            <person name="Brusic V."/>
            <person name="Quackenbush J."/>
            <person name="Wahlestedt C."/>
            <person name="Mattick J.S."/>
            <person name="Hume D.A."/>
            <person name="Kai C."/>
            <person name="Sasaki D."/>
            <person name="Tomaru Y."/>
            <person name="Fukuda S."/>
            <person name="Kanamori-Katayama M."/>
            <person name="Suzuki M."/>
            <person name="Aoki J."/>
            <person name="Arakawa T."/>
            <person name="Iida J."/>
            <person name="Imamura K."/>
            <person name="Itoh M."/>
            <person name="Kato T."/>
            <person name="Kawaji H."/>
            <person name="Kawagashira N."/>
            <person name="Kawashima T."/>
            <person name="Kojima M."/>
            <person name="Kondo S."/>
            <person name="Konno H."/>
            <person name="Nakano K."/>
            <person name="Ninomiya N."/>
            <person name="Nishio T."/>
            <person name="Okada M."/>
            <person name="Plessy C."/>
            <person name="Shibata K."/>
            <person name="Shiraki T."/>
            <person name="Suzuki S."/>
            <person name="Tagami M."/>
            <person name="Waki K."/>
            <person name="Watahiki A."/>
            <person name="Okamura-Oho Y."/>
            <person name="Suzuki H."/>
            <person name="Kawai J."/>
            <person name="Hayashizaki Y."/>
        </authorList>
    </citation>
    <scope>NUCLEOTIDE SEQUENCE [LARGE SCALE MRNA]</scope>
    <source>
        <strain>C57BL/6J</strain>
        <tissue>Bone marrow</tissue>
        <tissue>Diencephalon</tissue>
        <tissue>Heart</tissue>
        <tissue>Pituitary</tissue>
    </source>
</reference>
<reference key="2">
    <citation type="journal article" date="2004" name="Genome Res.">
        <title>The status, quality, and expansion of the NIH full-length cDNA project: the Mammalian Gene Collection (MGC).</title>
        <authorList>
            <consortium name="The MGC Project Team"/>
        </authorList>
    </citation>
    <scope>NUCLEOTIDE SEQUENCE [LARGE SCALE MRNA]</scope>
    <source>
        <strain>Czech II</strain>
        <tissue>Mammary tumor</tissue>
    </source>
</reference>
<reference key="3">
    <citation type="journal article" date="2007" name="Proc. Natl. Acad. Sci. U.S.A.">
        <title>Large-scale phosphorylation analysis of mouse liver.</title>
        <authorList>
            <person name="Villen J."/>
            <person name="Beausoleil S.A."/>
            <person name="Gerber S.A."/>
            <person name="Gygi S.P."/>
        </authorList>
    </citation>
    <scope>PHOSPHORYLATION [LARGE SCALE ANALYSIS] AT SER-432</scope>
    <scope>IDENTIFICATION BY MASS SPECTROMETRY [LARGE SCALE ANALYSIS]</scope>
    <source>
        <tissue>Liver</tissue>
    </source>
</reference>
<reference key="4">
    <citation type="journal article" date="2009" name="Immunity">
        <title>The phagosomal proteome in interferon-gamma-activated macrophages.</title>
        <authorList>
            <person name="Trost M."/>
            <person name="English L."/>
            <person name="Lemieux S."/>
            <person name="Courcelles M."/>
            <person name="Desjardins M."/>
            <person name="Thibault P."/>
        </authorList>
    </citation>
    <scope>PHOSPHORYLATION [LARGE SCALE ANALYSIS] AT SER-432</scope>
    <scope>IDENTIFICATION BY MASS SPECTROMETRY [LARGE SCALE ANALYSIS]</scope>
</reference>
<reference key="5">
    <citation type="journal article" date="2010" name="Cell">
        <title>A tissue-specific atlas of mouse protein phosphorylation and expression.</title>
        <authorList>
            <person name="Huttlin E.L."/>
            <person name="Jedrychowski M.P."/>
            <person name="Elias J.E."/>
            <person name="Goswami T."/>
            <person name="Rad R."/>
            <person name="Beausoleil S.A."/>
            <person name="Villen J."/>
            <person name="Haas W."/>
            <person name="Sowa M.E."/>
            <person name="Gygi S.P."/>
        </authorList>
    </citation>
    <scope>PHOSPHORYLATION [LARGE SCALE ANALYSIS] AT SER-429 AND SER-432</scope>
    <scope>IDENTIFICATION BY MASS SPECTROMETRY [LARGE SCALE ANALYSIS]</scope>
    <source>
        <tissue>Brain</tissue>
        <tissue>Brown adipose tissue</tissue>
        <tissue>Heart</tissue>
        <tissue>Kidney</tissue>
        <tissue>Lung</tissue>
        <tissue>Pancreas</tissue>
        <tissue>Testis</tissue>
    </source>
</reference>
<sequence length="437" mass="50115">MKVIFLRQLKTRGMERKCSRRPGLGPPTLYTFLLGIIFITLSSSRILLVKYSANEENKYDYLPTTVNVCSELMKLILCILVSLCVIKKEDHQSRHLRCTSWKEFSSFMKWSIPAFLYFLDNLIVFYVLSYLQPAMAVIFSNFSIITTALLFRIVLKRHLNWIQWASLLILFLSIVALTASTKTSQHELAGHGFHHDAFFTPSNSCLHFRRDCSLRDNCTSKEWTFSEVQWNTTARVFSHIRLGLGHVLIIVQCFISSMANIYNEKILKEGTQLTESIFIQNSKLYFFGIVFNGLTLVLQSSNRDQIQNCGFFYGHNAFSVVLIFVTAFQGLSVAFILKFLDNMFHVLMAQVTTVIITTVSVLVFDFRPSLDFFLEAPSVLLSIFIYNASKPQNLECAPKQERIRHLSGSLWERSSGDGEELERLTKLKSDDSDDDTL</sequence>
<keyword id="KW-0050">Antiport</keyword>
<keyword id="KW-0325">Glycoprotein</keyword>
<keyword id="KW-0333">Golgi apparatus</keyword>
<keyword id="KW-0472">Membrane</keyword>
<keyword id="KW-0597">Phosphoprotein</keyword>
<keyword id="KW-1185">Reference proteome</keyword>
<keyword id="KW-0762">Sugar transport</keyword>
<keyword id="KW-0812">Transmembrane</keyword>
<keyword id="KW-1133">Transmembrane helix</keyword>
<keyword id="KW-0813">Transport</keyword>
<evidence type="ECO:0000250" key="1">
    <source>
        <dbReference type="UniProtKB" id="Q9BS91"/>
    </source>
</evidence>
<evidence type="ECO:0000255" key="2"/>
<evidence type="ECO:0000256" key="3">
    <source>
        <dbReference type="SAM" id="MobiDB-lite"/>
    </source>
</evidence>
<evidence type="ECO:0000305" key="4"/>
<evidence type="ECO:0000312" key="5">
    <source>
        <dbReference type="MGI" id="MGI:1921352"/>
    </source>
</evidence>
<evidence type="ECO:0007744" key="6">
    <source>
    </source>
</evidence>
<evidence type="ECO:0007744" key="7">
    <source>
    </source>
</evidence>
<evidence type="ECO:0007744" key="8">
    <source>
    </source>
</evidence>
<proteinExistence type="evidence at protein level"/>
<gene>
    <name evidence="5" type="primary">Slc35a5</name>
</gene>
<dbReference type="EMBL" id="AK003124">
    <property type="protein sequence ID" value="BAB22584.2"/>
    <property type="molecule type" value="mRNA"/>
</dbReference>
<dbReference type="EMBL" id="AK030566">
    <property type="protein sequence ID" value="BAC27026.1"/>
    <property type="molecule type" value="mRNA"/>
</dbReference>
<dbReference type="EMBL" id="AK033921">
    <property type="protein sequence ID" value="BAC28515.1"/>
    <property type="molecule type" value="mRNA"/>
</dbReference>
<dbReference type="EMBL" id="AK150825">
    <property type="protein sequence ID" value="BAE29887.1"/>
    <property type="molecule type" value="mRNA"/>
</dbReference>
<dbReference type="EMBL" id="AK151484">
    <property type="protein sequence ID" value="BAE30437.1"/>
    <property type="molecule type" value="mRNA"/>
</dbReference>
<dbReference type="EMBL" id="BC011115">
    <property type="protein sequence ID" value="AAH11115.2"/>
    <property type="molecule type" value="mRNA"/>
</dbReference>
<dbReference type="CCDS" id="CCDS28193.1"/>
<dbReference type="RefSeq" id="NP_083032.2">
    <property type="nucleotide sequence ID" value="NM_028756.4"/>
</dbReference>
<dbReference type="RefSeq" id="XP_036016047.1">
    <property type="nucleotide sequence ID" value="XM_036160154.1"/>
</dbReference>
<dbReference type="SMR" id="Q921R7"/>
<dbReference type="BioGRID" id="216493">
    <property type="interactions" value="1"/>
</dbReference>
<dbReference type="FunCoup" id="Q921R7">
    <property type="interactions" value="2059"/>
</dbReference>
<dbReference type="STRING" id="10090.ENSMUSP00000023344"/>
<dbReference type="GlyCosmos" id="Q921R7">
    <property type="glycosylation" value="1 site, No reported glycans"/>
</dbReference>
<dbReference type="GlyGen" id="Q921R7">
    <property type="glycosylation" value="1 site"/>
</dbReference>
<dbReference type="iPTMnet" id="Q921R7"/>
<dbReference type="PhosphoSitePlus" id="Q921R7"/>
<dbReference type="jPOST" id="Q921R7"/>
<dbReference type="PaxDb" id="10090-ENSMUSP00000023344"/>
<dbReference type="ProteomicsDB" id="256818"/>
<dbReference type="Antibodypedia" id="32514">
    <property type="antibodies" value="38 antibodies from 13 providers"/>
</dbReference>
<dbReference type="DNASU" id="74102"/>
<dbReference type="Ensembl" id="ENSMUST00000023344.10">
    <property type="protein sequence ID" value="ENSMUSP00000023344.4"/>
    <property type="gene ID" value="ENSMUSG00000022664.12"/>
</dbReference>
<dbReference type="GeneID" id="74102"/>
<dbReference type="KEGG" id="mmu:74102"/>
<dbReference type="UCSC" id="uc007zih.2">
    <property type="organism name" value="mouse"/>
</dbReference>
<dbReference type="AGR" id="MGI:1921352"/>
<dbReference type="CTD" id="55032"/>
<dbReference type="MGI" id="MGI:1921352">
    <property type="gene designation" value="Slc35a5"/>
</dbReference>
<dbReference type="VEuPathDB" id="HostDB:ENSMUSG00000022664"/>
<dbReference type="eggNOG" id="KOG2234">
    <property type="taxonomic scope" value="Eukaryota"/>
</dbReference>
<dbReference type="GeneTree" id="ENSGT00950000182827"/>
<dbReference type="HOGENOM" id="CLU_044353_0_0_1"/>
<dbReference type="InParanoid" id="Q921R7"/>
<dbReference type="OMA" id="SCLKWAV"/>
<dbReference type="OrthoDB" id="408493at2759"/>
<dbReference type="PhylomeDB" id="Q921R7"/>
<dbReference type="TreeFam" id="TF354304"/>
<dbReference type="BioGRID-ORCS" id="74102">
    <property type="hits" value="1 hit in 78 CRISPR screens"/>
</dbReference>
<dbReference type="PRO" id="PR:Q921R7"/>
<dbReference type="Proteomes" id="UP000000589">
    <property type="component" value="Chromosome 16"/>
</dbReference>
<dbReference type="RNAct" id="Q921R7">
    <property type="molecule type" value="protein"/>
</dbReference>
<dbReference type="Bgee" id="ENSMUSG00000022664">
    <property type="expression patterns" value="Expressed in spermatid and 241 other cell types or tissues"/>
</dbReference>
<dbReference type="ExpressionAtlas" id="Q921R7">
    <property type="expression patterns" value="baseline and differential"/>
</dbReference>
<dbReference type="GO" id="GO:0000139">
    <property type="term" value="C:Golgi membrane"/>
    <property type="evidence" value="ECO:0000250"/>
    <property type="project" value="UniProtKB"/>
</dbReference>
<dbReference type="GO" id="GO:0015297">
    <property type="term" value="F:antiporter activity"/>
    <property type="evidence" value="ECO:0007669"/>
    <property type="project" value="UniProtKB-KW"/>
</dbReference>
<dbReference type="GO" id="GO:0015165">
    <property type="term" value="F:pyrimidine nucleotide-sugar transmembrane transporter activity"/>
    <property type="evidence" value="ECO:0000250"/>
    <property type="project" value="UniProtKB"/>
</dbReference>
<dbReference type="InterPro" id="IPR007271">
    <property type="entry name" value="Nuc_sug_transpt"/>
</dbReference>
<dbReference type="NCBIfam" id="TIGR00803">
    <property type="entry name" value="nst"/>
    <property type="match status" value="1"/>
</dbReference>
<dbReference type="PANTHER" id="PTHR10231">
    <property type="entry name" value="NUCLEOTIDE-SUGAR TRANSMEMBRANE TRANSPORTER"/>
    <property type="match status" value="1"/>
</dbReference>
<dbReference type="Pfam" id="PF04142">
    <property type="entry name" value="Nuc_sug_transp"/>
    <property type="match status" value="1"/>
</dbReference>
<dbReference type="PIRSF" id="PIRSF005799">
    <property type="entry name" value="UDP-gal_transpt"/>
    <property type="match status" value="1"/>
</dbReference>
<dbReference type="SUPFAM" id="SSF103481">
    <property type="entry name" value="Multidrug resistance efflux transporter EmrE"/>
    <property type="match status" value="1"/>
</dbReference>
<protein>
    <recommendedName>
        <fullName evidence="1">UDP-sugar transporter protein SLC35A5</fullName>
    </recommendedName>
    <alternativeName>
        <fullName evidence="5">Solute carrier family 35 member A5</fullName>
    </alternativeName>
</protein>
<feature type="chain" id="PRO_0000309356" description="UDP-sugar transporter protein SLC35A5">
    <location>
        <begin position="1"/>
        <end position="437"/>
    </location>
</feature>
<feature type="topological domain" description="Cytoplasmic" evidence="4">
    <location>
        <begin position="1"/>
        <end position="21"/>
    </location>
</feature>
<feature type="transmembrane region" description="Helical" evidence="2">
    <location>
        <begin position="22"/>
        <end position="42"/>
    </location>
</feature>
<feature type="topological domain" description="Lumenal" evidence="4">
    <location>
        <begin position="43"/>
        <end position="65"/>
    </location>
</feature>
<feature type="transmembrane region" description="Helical" evidence="2">
    <location>
        <begin position="66"/>
        <end position="86"/>
    </location>
</feature>
<feature type="topological domain" description="Cytoplasmic" evidence="4">
    <location>
        <begin position="87"/>
        <end position="106"/>
    </location>
</feature>
<feature type="transmembrane region" description="Helical" evidence="2">
    <location>
        <begin position="107"/>
        <end position="129"/>
    </location>
</feature>
<feature type="topological domain" description="Lumenal" evidence="4">
    <location>
        <begin position="130"/>
        <end position="132"/>
    </location>
</feature>
<feature type="transmembrane region" description="Helical" evidence="2">
    <location>
        <begin position="133"/>
        <end position="155"/>
    </location>
</feature>
<feature type="topological domain" description="Cytoplasmic" evidence="4">
    <location>
        <begin position="156"/>
        <end position="158"/>
    </location>
</feature>
<feature type="transmembrane region" description="Helical" evidence="2">
    <location>
        <begin position="159"/>
        <end position="179"/>
    </location>
</feature>
<feature type="topological domain" description="Lumenal" evidence="4">
    <location>
        <begin position="180"/>
        <end position="241"/>
    </location>
</feature>
<feature type="transmembrane region" description="Helical" evidence="2">
    <location>
        <begin position="242"/>
        <end position="262"/>
    </location>
</feature>
<feature type="topological domain" description="Cytoplasmic" evidence="4">
    <location>
        <begin position="263"/>
        <end position="276"/>
    </location>
</feature>
<feature type="transmembrane region" description="Helical" evidence="2">
    <location>
        <begin position="277"/>
        <end position="297"/>
    </location>
</feature>
<feature type="topological domain" description="Lumenal" evidence="4">
    <location>
        <begin position="298"/>
        <end position="316"/>
    </location>
</feature>
<feature type="transmembrane region" description="Helical" evidence="2">
    <location>
        <begin position="317"/>
        <end position="337"/>
    </location>
</feature>
<feature type="topological domain" description="Cytoplasmic" evidence="4">
    <location>
        <begin position="338"/>
        <end position="343"/>
    </location>
</feature>
<feature type="transmembrane region" description="Helical" evidence="2">
    <location>
        <begin position="344"/>
        <end position="364"/>
    </location>
</feature>
<feature type="topological domain" description="Lumenal" evidence="4">
    <location>
        <begin position="365"/>
        <end position="367"/>
    </location>
</feature>
<feature type="transmembrane region" description="Helical" evidence="2">
    <location>
        <begin position="368"/>
        <end position="388"/>
    </location>
</feature>
<feature type="topological domain" description="Cytoplasmic" evidence="4">
    <location>
        <begin position="389"/>
        <end position="437"/>
    </location>
</feature>
<feature type="region of interest" description="Disordered" evidence="3">
    <location>
        <begin position="412"/>
        <end position="437"/>
    </location>
</feature>
<feature type="compositionally biased region" description="Basic and acidic residues" evidence="3">
    <location>
        <begin position="421"/>
        <end position="430"/>
    </location>
</feature>
<feature type="modified residue" description="Phosphoserine" evidence="1">
    <location>
        <position position="407"/>
    </location>
</feature>
<feature type="modified residue" description="Phosphoserine" evidence="8">
    <location>
        <position position="429"/>
    </location>
</feature>
<feature type="modified residue" description="Phosphoserine" evidence="6 7 8">
    <location>
        <position position="432"/>
    </location>
</feature>
<feature type="glycosylation site" description="N-linked (GlcNAc...) asparagine" evidence="2">
    <location>
        <position position="217"/>
    </location>
</feature>
<feature type="sequence conflict" description="In Ref. 2; AAH11115." evidence="4" ref="2">
    <original>I</original>
    <variation>M</variation>
    <location>
        <position position="36"/>
    </location>
</feature>
<accession>Q921R7</accession>
<accession>Q9DC72</accession>
<name>S35A5_MOUSE</name>